<keyword id="KW-1185">Reference proteome</keyword>
<keyword id="KW-0687">Ribonucleoprotein</keyword>
<keyword id="KW-0689">Ribosomal protein</keyword>
<gene>
    <name evidence="1" type="primary">rpmF</name>
    <name type="ordered locus">FTT_1371</name>
</gene>
<protein>
    <recommendedName>
        <fullName evidence="1">Large ribosomal subunit protein bL32</fullName>
    </recommendedName>
    <alternativeName>
        <fullName evidence="3">50S ribosomal protein L32</fullName>
    </alternativeName>
</protein>
<name>RL32_FRATT</name>
<evidence type="ECO:0000255" key="1">
    <source>
        <dbReference type="HAMAP-Rule" id="MF_00340"/>
    </source>
</evidence>
<evidence type="ECO:0000256" key="2">
    <source>
        <dbReference type="SAM" id="MobiDB-lite"/>
    </source>
</evidence>
<evidence type="ECO:0000305" key="3"/>
<reference key="1">
    <citation type="journal article" date="2005" name="Nat. Genet.">
        <title>The complete genome sequence of Francisella tularensis, the causative agent of tularemia.</title>
        <authorList>
            <person name="Larsson P."/>
            <person name="Oyston P.C.F."/>
            <person name="Chain P."/>
            <person name="Chu M.C."/>
            <person name="Duffield M."/>
            <person name="Fuxelius H.-H."/>
            <person name="Garcia E."/>
            <person name="Haelltorp G."/>
            <person name="Johansson D."/>
            <person name="Isherwood K.E."/>
            <person name="Karp P.D."/>
            <person name="Larsson E."/>
            <person name="Liu Y."/>
            <person name="Michell S."/>
            <person name="Prior J."/>
            <person name="Prior R."/>
            <person name="Malfatti S."/>
            <person name="Sjoestedt A."/>
            <person name="Svensson K."/>
            <person name="Thompson N."/>
            <person name="Vergez L."/>
            <person name="Wagg J.K."/>
            <person name="Wren B.W."/>
            <person name="Lindler L.E."/>
            <person name="Andersson S.G.E."/>
            <person name="Forsman M."/>
            <person name="Titball R.W."/>
        </authorList>
    </citation>
    <scope>NUCLEOTIDE SEQUENCE [LARGE SCALE GENOMIC DNA]</scope>
    <source>
        <strain>SCHU S4 / Schu 4</strain>
    </source>
</reference>
<organism>
    <name type="scientific">Francisella tularensis subsp. tularensis (strain SCHU S4 / Schu 4)</name>
    <dbReference type="NCBI Taxonomy" id="177416"/>
    <lineage>
        <taxon>Bacteria</taxon>
        <taxon>Pseudomonadati</taxon>
        <taxon>Pseudomonadota</taxon>
        <taxon>Gammaproteobacteria</taxon>
        <taxon>Thiotrichales</taxon>
        <taxon>Francisellaceae</taxon>
        <taxon>Francisella</taxon>
    </lineage>
</organism>
<proteinExistence type="inferred from homology"/>
<dbReference type="EMBL" id="AJ749949">
    <property type="protein sequence ID" value="CAG46004.1"/>
    <property type="molecule type" value="Genomic_DNA"/>
</dbReference>
<dbReference type="RefSeq" id="WP_003022175.1">
    <property type="nucleotide sequence ID" value="NZ_CP010290.1"/>
</dbReference>
<dbReference type="RefSeq" id="YP_170320.1">
    <property type="nucleotide sequence ID" value="NC_006570.2"/>
</dbReference>
<dbReference type="SMR" id="Q5NF72"/>
<dbReference type="STRING" id="177416.FTT_1371"/>
<dbReference type="DNASU" id="3191613"/>
<dbReference type="EnsemblBacteria" id="CAG46004">
    <property type="protein sequence ID" value="CAG46004"/>
    <property type="gene ID" value="FTT_1371"/>
</dbReference>
<dbReference type="KEGG" id="ftu:FTT_1371"/>
<dbReference type="eggNOG" id="COG0333">
    <property type="taxonomic scope" value="Bacteria"/>
</dbReference>
<dbReference type="OrthoDB" id="9801927at2"/>
<dbReference type="Proteomes" id="UP000001174">
    <property type="component" value="Chromosome"/>
</dbReference>
<dbReference type="GO" id="GO:0015934">
    <property type="term" value="C:large ribosomal subunit"/>
    <property type="evidence" value="ECO:0007669"/>
    <property type="project" value="InterPro"/>
</dbReference>
<dbReference type="GO" id="GO:0003735">
    <property type="term" value="F:structural constituent of ribosome"/>
    <property type="evidence" value="ECO:0007669"/>
    <property type="project" value="InterPro"/>
</dbReference>
<dbReference type="GO" id="GO:0006412">
    <property type="term" value="P:translation"/>
    <property type="evidence" value="ECO:0007669"/>
    <property type="project" value="UniProtKB-UniRule"/>
</dbReference>
<dbReference type="HAMAP" id="MF_00340">
    <property type="entry name" value="Ribosomal_bL32"/>
    <property type="match status" value="1"/>
</dbReference>
<dbReference type="InterPro" id="IPR002677">
    <property type="entry name" value="Ribosomal_bL32"/>
</dbReference>
<dbReference type="InterPro" id="IPR044957">
    <property type="entry name" value="Ribosomal_bL32_bact"/>
</dbReference>
<dbReference type="InterPro" id="IPR011332">
    <property type="entry name" value="Ribosomal_zn-bd"/>
</dbReference>
<dbReference type="NCBIfam" id="TIGR01031">
    <property type="entry name" value="rpmF_bact"/>
    <property type="match status" value="1"/>
</dbReference>
<dbReference type="PANTHER" id="PTHR35534">
    <property type="entry name" value="50S RIBOSOMAL PROTEIN L32"/>
    <property type="match status" value="1"/>
</dbReference>
<dbReference type="PANTHER" id="PTHR35534:SF1">
    <property type="entry name" value="LARGE RIBOSOMAL SUBUNIT PROTEIN BL32"/>
    <property type="match status" value="1"/>
</dbReference>
<dbReference type="Pfam" id="PF01783">
    <property type="entry name" value="Ribosomal_L32p"/>
    <property type="match status" value="1"/>
</dbReference>
<dbReference type="SUPFAM" id="SSF57829">
    <property type="entry name" value="Zn-binding ribosomal proteins"/>
    <property type="match status" value="1"/>
</dbReference>
<accession>Q5NF72</accession>
<feature type="chain" id="PRO_0000225725" description="Large ribosomal subunit protein bL32">
    <location>
        <begin position="1"/>
        <end position="60"/>
    </location>
</feature>
<feature type="region of interest" description="Disordered" evidence="2">
    <location>
        <begin position="1"/>
        <end position="60"/>
    </location>
</feature>
<feature type="compositionally biased region" description="Basic residues" evidence="2">
    <location>
        <begin position="7"/>
        <end position="16"/>
    </location>
</feature>
<feature type="compositionally biased region" description="Polar residues" evidence="2">
    <location>
        <begin position="22"/>
        <end position="31"/>
    </location>
</feature>
<comment type="similarity">
    <text evidence="1">Belongs to the bacterial ribosomal protein bL32 family.</text>
</comment>
<sequence length="60" mass="6861">MAVQQVKKSRSKRDIRRSHDSLTNPTLSTDKSTGELHLRHHVSPNGFYKGRKVVDTKSED</sequence>